<reference key="1">
    <citation type="journal article" date="2002" name="J. Cereb. Blood Flow Metab.">
        <title>The blood-brain barrier creatine transporter is a major pathway for supplying creatine to the brain.</title>
        <authorList>
            <person name="Ohtsuki S."/>
            <person name="Tachikawa M."/>
            <person name="Takanaga H."/>
            <person name="Shimizu H."/>
            <person name="Watanabe M."/>
            <person name="Hosoya K."/>
            <person name="Terasaki T."/>
        </authorList>
    </citation>
    <scope>NUCLEOTIDE SEQUENCE [MRNA] (ISOFORM 2)</scope>
    <scope>FUNCTION</scope>
    <scope>TRANSPORTER ACTIVITY</scope>
    <scope>BIOPHYSICOCHEMICAL PROPERTIES</scope>
    <scope>GLYCOSYLATION</scope>
</reference>
<reference key="2">
    <citation type="submission" date="2001-12" db="EMBL/GenBank/DDBJ databases">
        <title>Cloning and expression of mouse creatine transporter gene.</title>
        <authorList>
            <person name="Liu Q.-R."/>
            <person name="Li Q.-F."/>
        </authorList>
    </citation>
    <scope>NUCLEOTIDE SEQUENCE (ISOFORM 1)</scope>
</reference>
<reference key="3">
    <citation type="journal article" date="2009" name="PLoS Biol.">
        <title>Lineage-specific biology revealed by a finished genome assembly of the mouse.</title>
        <authorList>
            <person name="Church D.M."/>
            <person name="Goodstadt L."/>
            <person name="Hillier L.W."/>
            <person name="Zody M.C."/>
            <person name="Goldstein S."/>
            <person name="She X."/>
            <person name="Bult C.J."/>
            <person name="Agarwala R."/>
            <person name="Cherry J.L."/>
            <person name="DiCuccio M."/>
            <person name="Hlavina W."/>
            <person name="Kapustin Y."/>
            <person name="Meric P."/>
            <person name="Maglott D."/>
            <person name="Birtle Z."/>
            <person name="Marques A.C."/>
            <person name="Graves T."/>
            <person name="Zhou S."/>
            <person name="Teague B."/>
            <person name="Potamousis K."/>
            <person name="Churas C."/>
            <person name="Place M."/>
            <person name="Herschleb J."/>
            <person name="Runnheim R."/>
            <person name="Forrest D."/>
            <person name="Amos-Landgraf J."/>
            <person name="Schwartz D.C."/>
            <person name="Cheng Z."/>
            <person name="Lindblad-Toh K."/>
            <person name="Eichler E.E."/>
            <person name="Ponting C.P."/>
        </authorList>
    </citation>
    <scope>NUCLEOTIDE SEQUENCE [LARGE SCALE GENOMIC DNA]</scope>
    <source>
        <strain>C57BL/6J</strain>
    </source>
</reference>
<reference key="4">
    <citation type="journal article" date="2004" name="Genome Res.">
        <title>The status, quality, and expansion of the NIH full-length cDNA project: the Mammalian Gene Collection (MGC).</title>
        <authorList>
            <consortium name="The MGC Project Team"/>
        </authorList>
    </citation>
    <scope>NUCLEOTIDE SEQUENCE [LARGE SCALE MRNA] OF 58-635 (ISOFORMS 2 AND 3)</scope>
    <source>
        <strain>FVB/N</strain>
        <tissue>Embryo</tissue>
        <tissue>Kidney</tissue>
    </source>
</reference>
<reference key="5">
    <citation type="journal article" date="2010" name="Cell">
        <title>A tissue-specific atlas of mouse protein phosphorylation and expression.</title>
        <authorList>
            <person name="Huttlin E.L."/>
            <person name="Jedrychowski M.P."/>
            <person name="Elias J.E."/>
            <person name="Goswami T."/>
            <person name="Rad R."/>
            <person name="Beausoleil S.A."/>
            <person name="Villen J."/>
            <person name="Haas W."/>
            <person name="Sowa M.E."/>
            <person name="Gygi S.P."/>
        </authorList>
    </citation>
    <scope>PHOSPHORYLATION [LARGE SCALE ANALYSIS] AT THR-620 AND SER-623</scope>
    <scope>IDENTIFICATION BY MASS SPECTROMETRY [LARGE SCALE ANALYSIS]</scope>
    <source>
        <tissue>Brain</tissue>
    </source>
</reference>
<keyword id="KW-0025">Alternative splicing</keyword>
<keyword id="KW-1003">Cell membrane</keyword>
<keyword id="KW-0325">Glycoprotein</keyword>
<keyword id="KW-0406">Ion transport</keyword>
<keyword id="KW-0472">Membrane</keyword>
<keyword id="KW-0597">Phosphoprotein</keyword>
<keyword id="KW-1185">Reference proteome</keyword>
<keyword id="KW-0915">Sodium</keyword>
<keyword id="KW-0739">Sodium transport</keyword>
<keyword id="KW-0769">Symport</keyword>
<keyword id="KW-0812">Transmembrane</keyword>
<keyword id="KW-1133">Transmembrane helix</keyword>
<keyword id="KW-0813">Transport</keyword>
<protein>
    <recommendedName>
        <fullName>Sodium- and chloride-dependent creatine transporter 1</fullName>
        <shortName>CT1</shortName>
        <shortName>Creatine transporter 1</shortName>
    </recommendedName>
    <alternativeName>
        <fullName>Solute carrier family 6 member 8</fullName>
    </alternativeName>
</protein>
<name>SC6A8_MOUSE</name>
<gene>
    <name type="primary">Slc6a8</name>
    <name type="synonym">Crt</name>
</gene>
<accession>Q8VBW1</accession>
<accession>A2ALM4</accession>
<accession>Q80YC9</accession>
<accession>Q8K4R3</accession>
<accession>Q8R1L0</accession>
<feature type="chain" id="PRO_0000214775" description="Sodium- and chloride-dependent creatine transporter 1">
    <location>
        <begin position="1"/>
        <end position="635"/>
    </location>
</feature>
<feature type="topological domain" description="Cytoplasmic" evidence="2">
    <location>
        <begin position="1"/>
        <end position="60"/>
    </location>
</feature>
<feature type="transmembrane region" description="Helical" evidence="2">
    <location>
        <begin position="61"/>
        <end position="81"/>
    </location>
</feature>
<feature type="topological domain" description="Extracellular" evidence="2">
    <location>
        <begin position="82"/>
        <end position="87"/>
    </location>
</feature>
<feature type="transmembrane region" description="Helical" evidence="2">
    <location>
        <begin position="88"/>
        <end position="108"/>
    </location>
</feature>
<feature type="topological domain" description="Cytoplasmic" evidence="2">
    <location>
        <begin position="109"/>
        <end position="138"/>
    </location>
</feature>
<feature type="transmembrane region" description="Helical" evidence="2">
    <location>
        <begin position="139"/>
        <end position="159"/>
    </location>
</feature>
<feature type="topological domain" description="Extracellular" evidence="2">
    <location>
        <begin position="160"/>
        <end position="230"/>
    </location>
</feature>
<feature type="transmembrane region" description="Helical" evidence="2">
    <location>
        <begin position="231"/>
        <end position="251"/>
    </location>
</feature>
<feature type="topological domain" description="Cytoplasmic" evidence="2">
    <location>
        <begin position="252"/>
        <end position="269"/>
    </location>
</feature>
<feature type="transmembrane region" description="Helical" evidence="2">
    <location>
        <begin position="270"/>
        <end position="290"/>
    </location>
</feature>
<feature type="topological domain" description="Extracellular" evidence="2">
    <location>
        <begin position="291"/>
        <end position="304"/>
    </location>
</feature>
<feature type="transmembrane region" description="Helical" evidence="2">
    <location>
        <begin position="305"/>
        <end position="325"/>
    </location>
</feature>
<feature type="topological domain" description="Cytoplasmic" evidence="2">
    <location>
        <begin position="326"/>
        <end position="341"/>
    </location>
</feature>
<feature type="transmembrane region" description="Helical" evidence="2">
    <location>
        <begin position="342"/>
        <end position="362"/>
    </location>
</feature>
<feature type="topological domain" description="Extracellular" evidence="2">
    <location>
        <begin position="363"/>
        <end position="394"/>
    </location>
</feature>
<feature type="transmembrane region" description="Helical" evidence="2">
    <location>
        <begin position="395"/>
        <end position="415"/>
    </location>
</feature>
<feature type="topological domain" description="Cytoplasmic" evidence="2">
    <location>
        <begin position="416"/>
        <end position="444"/>
    </location>
</feature>
<feature type="transmembrane region" description="Helical" evidence="2">
    <location>
        <begin position="445"/>
        <end position="465"/>
    </location>
</feature>
<feature type="topological domain" description="Extracellular" evidence="2">
    <location>
        <begin position="466"/>
        <end position="479"/>
    </location>
</feature>
<feature type="transmembrane region" description="Helical" evidence="2">
    <location>
        <begin position="480"/>
        <end position="500"/>
    </location>
</feature>
<feature type="topological domain" description="Cytoplasmic" evidence="2">
    <location>
        <begin position="501"/>
        <end position="520"/>
    </location>
</feature>
<feature type="transmembrane region" description="Helical" evidence="2">
    <location>
        <begin position="521"/>
        <end position="541"/>
    </location>
</feature>
<feature type="topological domain" description="Extracellular" evidence="2">
    <location>
        <begin position="542"/>
        <end position="560"/>
    </location>
</feature>
<feature type="transmembrane region" description="Helical" evidence="2">
    <location>
        <begin position="561"/>
        <end position="581"/>
    </location>
</feature>
<feature type="topological domain" description="Cytoplasmic" evidence="2">
    <location>
        <begin position="582"/>
        <end position="635"/>
    </location>
</feature>
<feature type="region of interest" description="Disordered" evidence="3">
    <location>
        <begin position="1"/>
        <end position="27"/>
    </location>
</feature>
<feature type="modified residue" description="Phosphothreonine" evidence="1">
    <location>
        <position position="617"/>
    </location>
</feature>
<feature type="modified residue" description="Phosphothreonine" evidence="8">
    <location>
        <position position="620"/>
    </location>
</feature>
<feature type="modified residue" description="Phosphoserine" evidence="8">
    <location>
        <position position="623"/>
    </location>
</feature>
<feature type="glycosylation site" description="N-linked (GlcNAc...) asparagine" evidence="2">
    <location>
        <position position="192"/>
    </location>
</feature>
<feature type="glycosylation site" description="N-linked (GlcNAc...) asparagine" evidence="2">
    <location>
        <position position="197"/>
    </location>
</feature>
<feature type="glycosylation site" description="N-linked (GlcNAc...) asparagine" evidence="2">
    <location>
        <position position="548"/>
    </location>
</feature>
<feature type="splice variant" id="VSP_061625" description="In isoform 3." evidence="5">
    <location>
        <begin position="462"/>
        <end position="464"/>
    </location>
</feature>
<feature type="splice variant" id="VSP_061626" description="In isoform 1." evidence="6">
    <original>D</original>
    <variation>DVSGGK</variation>
    <location>
        <position position="464"/>
    </location>
</feature>
<organism>
    <name type="scientific">Mus musculus</name>
    <name type="common">Mouse</name>
    <dbReference type="NCBI Taxonomy" id="10090"/>
    <lineage>
        <taxon>Eukaryota</taxon>
        <taxon>Metazoa</taxon>
        <taxon>Chordata</taxon>
        <taxon>Craniata</taxon>
        <taxon>Vertebrata</taxon>
        <taxon>Euteleostomi</taxon>
        <taxon>Mammalia</taxon>
        <taxon>Eutheria</taxon>
        <taxon>Euarchontoglires</taxon>
        <taxon>Glires</taxon>
        <taxon>Rodentia</taxon>
        <taxon>Myomorpha</taxon>
        <taxon>Muroidea</taxon>
        <taxon>Muridae</taxon>
        <taxon>Murinae</taxon>
        <taxon>Mus</taxon>
        <taxon>Mus</taxon>
    </lineage>
</organism>
<sequence length="635" mass="70571">MAKKSAENGIYSVSGDEKKGPLIVSGPDGAPAKGDGPAGLGAPGGRLAVPPRETWTRQMDFIMSCVGFAVGLGNVWRFPYLCYKNGGGVFLIPYVLIALVGGIPIFFLEISLGQFMKAGSINVWNICPLFKGLGYASMVIVFYCNTYYIMVLAWGFYYLVKSFTTTLPWATCGHTWNTPDCVEIFRHEDCANASLANLTCDQLADRRSPVIEFWENKVLRLSTGLEVPGALNWEVTLCLLACWVLVYFCVWKGVKSTGKIVYFTATFPYVVLVVLLVRGVLLPGALDGIIYYLKPDWSKLGSPQVWIDAGTQIFFSYAIGLGALTALGSYNRFNNNCYKDAIILALINSGTSFFAGFVVFSILGFMATEQGVHISKVAESGPGLAFIAYPRAVTLMPVAPLWAALFFFMLLLLGLDSQFVGVEGFITGLLDLLPASYYFRFQREISVALCCALCFVIDLSMVTDGGMYVFQLFDYYSASGTTLLWQAFWECVVVAWVYGADRFMDDIACMIGYRPCPWMKWCWSFFTPLVCMGIFIFNIVYYEPLVYNNTYVYPWWGEAMGWAFALSSMLCVPLHLLGCLLRAKGTMAERWQHLTQPIWGLHHLEYRAQDADVRGLTTLTPVSESSKVVVVESVM</sequence>
<evidence type="ECO:0000250" key="1">
    <source>
        <dbReference type="UniProtKB" id="P48029"/>
    </source>
</evidence>
<evidence type="ECO:0000255" key="2"/>
<evidence type="ECO:0000256" key="3">
    <source>
        <dbReference type="SAM" id="MobiDB-lite"/>
    </source>
</evidence>
<evidence type="ECO:0000269" key="4">
    <source>
    </source>
</evidence>
<evidence type="ECO:0000303" key="5">
    <source>
    </source>
</evidence>
<evidence type="ECO:0000303" key="6">
    <source ref="2"/>
</evidence>
<evidence type="ECO:0000305" key="7"/>
<evidence type="ECO:0007744" key="8">
    <source>
    </source>
</evidence>
<comment type="function">
    <text evidence="4">Creatine:sodium symporter which mediates the uptake of creatine (PubMed:12439290). Plays an important role in supplying creatine to the brain via the blood-brain barrier (PubMed:12439290).</text>
</comment>
<comment type="catalytic activity">
    <reaction evidence="4">
        <text>creatine(out) + chloride(out) + 2 Na(+)(out) = creatine(in) + chloride(in) + 2 Na(+)(in)</text>
        <dbReference type="Rhea" id="RHEA:71831"/>
        <dbReference type="ChEBI" id="CHEBI:17996"/>
        <dbReference type="ChEBI" id="CHEBI:29101"/>
        <dbReference type="ChEBI" id="CHEBI:57947"/>
    </reaction>
</comment>
<comment type="biophysicochemical properties">
    <kinetics>
        <KM evidence="4">16.2 uM for creatine</KM>
        <Vmax evidence="4">0.1 nmol/min/mg enzyme for creatine</Vmax>
    </kinetics>
</comment>
<comment type="subcellular location">
    <subcellularLocation>
        <location evidence="1">Cell membrane</location>
        <topology evidence="2">Multi-pass membrane protein</topology>
    </subcellularLocation>
    <subcellularLocation>
        <location evidence="1">Apical cell membrane</location>
        <topology evidence="2">Multi-pass membrane protein</topology>
    </subcellularLocation>
</comment>
<comment type="alternative products">
    <event type="alternative splicing"/>
    <isoform>
        <id>Q8VBW1-2</id>
        <name>2</name>
        <sequence type="displayed"/>
    </isoform>
    <isoform>
        <id>Q8VBW1-1</id>
        <name>1</name>
        <sequence type="described" ref="VSP_061626"/>
    </isoform>
    <isoform>
        <id>Q8VBW1-3</id>
        <name>3</name>
        <sequence type="described" ref="VSP_061625"/>
    </isoform>
</comment>
<comment type="tissue specificity">
    <text evidence="4">Brain. Highly expressed in brain capillaries branching in all cortical layers and moderately expressed in neuronal perikarya (at protein level).</text>
</comment>
<comment type="PTM">
    <text evidence="4">Glycosylated.</text>
</comment>
<comment type="similarity">
    <text evidence="7">Belongs to the sodium:neurotransmitter symporter (SNF) (TC 2.A.22) family. SLC6A8 subfamily.</text>
</comment>
<dbReference type="EMBL" id="AB077327">
    <property type="protein sequence ID" value="BAC11857.1"/>
    <property type="molecule type" value="mRNA"/>
</dbReference>
<dbReference type="EMBL" id="AF459435">
    <property type="protein sequence ID" value="AAL66354.1"/>
    <property type="molecule type" value="mRNA"/>
</dbReference>
<dbReference type="EMBL" id="AF459436">
    <property type="protein sequence ID" value="AAL66355.1"/>
    <property type="molecule type" value="Genomic_DNA"/>
</dbReference>
<dbReference type="EMBL" id="AL805924">
    <property type="status" value="NOT_ANNOTATED_CDS"/>
    <property type="molecule type" value="Genomic_DNA"/>
</dbReference>
<dbReference type="EMBL" id="BC024444">
    <property type="protein sequence ID" value="AAH24444.1"/>
    <property type="molecule type" value="mRNA"/>
</dbReference>
<dbReference type="EMBL" id="BC049801">
    <property type="protein sequence ID" value="AAH49801.1"/>
    <property type="molecule type" value="mRNA"/>
</dbReference>
<dbReference type="CCDS" id="CCDS30208.1">
    <molecule id="Q8VBW1-1"/>
</dbReference>
<dbReference type="CCDS" id="CCDS53098.1">
    <molecule id="Q8VBW1-2"/>
</dbReference>
<dbReference type="RefSeq" id="NP_001136281.1">
    <molecule id="Q8VBW1-2"/>
    <property type="nucleotide sequence ID" value="NM_001142809.1"/>
</dbReference>
<dbReference type="RefSeq" id="NP_001136282.1">
    <molecule id="Q8VBW1-3"/>
    <property type="nucleotide sequence ID" value="NM_001142810.1"/>
</dbReference>
<dbReference type="RefSeq" id="NP_598748.1">
    <molecule id="Q8VBW1-1"/>
    <property type="nucleotide sequence ID" value="NM_133987.2"/>
</dbReference>
<dbReference type="SMR" id="Q8VBW1"/>
<dbReference type="BioGRID" id="221964">
    <property type="interactions" value="7"/>
</dbReference>
<dbReference type="FunCoup" id="Q8VBW1">
    <property type="interactions" value="39"/>
</dbReference>
<dbReference type="IntAct" id="Q8VBW1">
    <property type="interactions" value="6"/>
</dbReference>
<dbReference type="STRING" id="10090.ENSMUSP00000033752"/>
<dbReference type="GlyCosmos" id="Q8VBW1">
    <property type="glycosylation" value="3 sites, No reported glycans"/>
</dbReference>
<dbReference type="GlyGen" id="Q8VBW1">
    <property type="glycosylation" value="4 sites, 1 N-linked glycan (2 sites), 1 O-linked glycan (1 site)"/>
</dbReference>
<dbReference type="iPTMnet" id="Q8VBW1"/>
<dbReference type="PhosphoSitePlus" id="Q8VBW1"/>
<dbReference type="jPOST" id="Q8VBW1"/>
<dbReference type="PaxDb" id="10090-ENSMUSP00000033752"/>
<dbReference type="ProteomicsDB" id="255475">
    <molecule id="Q8VBW1-1"/>
</dbReference>
<dbReference type="ProteomicsDB" id="255476">
    <molecule id="Q8VBW1-2"/>
</dbReference>
<dbReference type="ProteomicsDB" id="255477">
    <molecule id="Q8VBW1-3"/>
</dbReference>
<dbReference type="Pumba" id="Q8VBW1"/>
<dbReference type="DNASU" id="102857"/>
<dbReference type="Ensembl" id="ENSMUST00000033752.14">
    <molecule id="Q8VBW1-1"/>
    <property type="protein sequence ID" value="ENSMUSP00000033752.8"/>
    <property type="gene ID" value="ENSMUSG00000019558.15"/>
</dbReference>
<dbReference type="Ensembl" id="ENSMUST00000114465.9">
    <molecule id="Q8VBW1-2"/>
    <property type="protein sequence ID" value="ENSMUSP00000110109.3"/>
    <property type="gene ID" value="ENSMUSG00000019558.15"/>
</dbReference>
<dbReference type="Ensembl" id="ENSMUST00000114467.10">
    <molecule id="Q8VBW1-2"/>
    <property type="protein sequence ID" value="ENSMUSP00000110111.3"/>
    <property type="gene ID" value="ENSMUSG00000019558.15"/>
</dbReference>
<dbReference type="GeneID" id="102857"/>
<dbReference type="KEGG" id="mmu:102857"/>
<dbReference type="UCSC" id="uc009tmf.2">
    <molecule id="Q8VBW1-2"/>
    <property type="organism name" value="mouse"/>
</dbReference>
<dbReference type="UCSC" id="uc009tmg.2">
    <molecule id="Q8VBW1-3"/>
    <property type="organism name" value="mouse"/>
</dbReference>
<dbReference type="AGR" id="MGI:2147834"/>
<dbReference type="CTD" id="6535"/>
<dbReference type="MGI" id="MGI:2147834">
    <property type="gene designation" value="Slc6a8"/>
</dbReference>
<dbReference type="VEuPathDB" id="HostDB:ENSMUSG00000019558"/>
<dbReference type="eggNOG" id="KOG3660">
    <property type="taxonomic scope" value="Eukaryota"/>
</dbReference>
<dbReference type="GeneTree" id="ENSGT00940000155869"/>
<dbReference type="InParanoid" id="Q8VBW1"/>
<dbReference type="OMA" id="CVEIFRQ"/>
<dbReference type="OrthoDB" id="29831at9989"/>
<dbReference type="PhylomeDB" id="Q8VBW1"/>
<dbReference type="TreeFam" id="TF343812"/>
<dbReference type="Reactome" id="R-MMU-71288">
    <property type="pathway name" value="Creatine metabolism"/>
</dbReference>
<dbReference type="BioGRID-ORCS" id="102857">
    <property type="hits" value="2 hits in 79 CRISPR screens"/>
</dbReference>
<dbReference type="ChiTaRS" id="Slc6a8">
    <property type="organism name" value="mouse"/>
</dbReference>
<dbReference type="PRO" id="PR:Q8VBW1"/>
<dbReference type="Proteomes" id="UP000000589">
    <property type="component" value="Chromosome X"/>
</dbReference>
<dbReference type="RNAct" id="Q8VBW1">
    <property type="molecule type" value="protein"/>
</dbReference>
<dbReference type="Bgee" id="ENSMUSG00000019558">
    <property type="expression patterns" value="Expressed in small intestine Peyer's patch and 257 other cell types or tissues"/>
</dbReference>
<dbReference type="ExpressionAtlas" id="Q8VBW1">
    <property type="expression patterns" value="baseline and differential"/>
</dbReference>
<dbReference type="GO" id="GO:0016324">
    <property type="term" value="C:apical plasma membrane"/>
    <property type="evidence" value="ECO:0007669"/>
    <property type="project" value="UniProtKB-SubCell"/>
</dbReference>
<dbReference type="GO" id="GO:0005309">
    <property type="term" value="F:creatine:sodium symporter activity"/>
    <property type="evidence" value="ECO:0000314"/>
    <property type="project" value="UniProtKB"/>
</dbReference>
<dbReference type="GO" id="GO:0015881">
    <property type="term" value="P:creatine transmembrane transport"/>
    <property type="evidence" value="ECO:0000250"/>
    <property type="project" value="UniProtKB"/>
</dbReference>
<dbReference type="GO" id="GO:0006836">
    <property type="term" value="P:neurotransmitter transport"/>
    <property type="evidence" value="ECO:0007669"/>
    <property type="project" value="InterPro"/>
</dbReference>
<dbReference type="CDD" id="cd11509">
    <property type="entry name" value="SLC6sbd_CT1"/>
    <property type="match status" value="1"/>
</dbReference>
<dbReference type="InterPro" id="IPR000175">
    <property type="entry name" value="Na/ntran_symport"/>
</dbReference>
<dbReference type="InterPro" id="IPR002984">
    <property type="entry name" value="Na/ntran_symport_creatine"/>
</dbReference>
<dbReference type="InterPro" id="IPR037272">
    <property type="entry name" value="SNS_sf"/>
</dbReference>
<dbReference type="PANTHER" id="PTHR11616:SF96">
    <property type="entry name" value="SODIUM- AND CHLORIDE-DEPENDENT CREATINE TRANSPORTER 1"/>
    <property type="match status" value="1"/>
</dbReference>
<dbReference type="PANTHER" id="PTHR11616">
    <property type="entry name" value="SODIUM/CHLORIDE DEPENDENT TRANSPORTER"/>
    <property type="match status" value="1"/>
</dbReference>
<dbReference type="Pfam" id="PF00209">
    <property type="entry name" value="SNF"/>
    <property type="match status" value="1"/>
</dbReference>
<dbReference type="PRINTS" id="PR01199">
    <property type="entry name" value="CRTTRANSPORT"/>
</dbReference>
<dbReference type="PRINTS" id="PR00176">
    <property type="entry name" value="NANEUSMPORT"/>
</dbReference>
<dbReference type="SUPFAM" id="SSF161070">
    <property type="entry name" value="SNF-like"/>
    <property type="match status" value="1"/>
</dbReference>
<dbReference type="PROSITE" id="PS00610">
    <property type="entry name" value="NA_NEUROTRAN_SYMP_1"/>
    <property type="match status" value="1"/>
</dbReference>
<dbReference type="PROSITE" id="PS00754">
    <property type="entry name" value="NA_NEUROTRAN_SYMP_2"/>
    <property type="match status" value="1"/>
</dbReference>
<dbReference type="PROSITE" id="PS50267">
    <property type="entry name" value="NA_NEUROTRAN_SYMP_3"/>
    <property type="match status" value="1"/>
</dbReference>
<proteinExistence type="evidence at protein level"/>